<feature type="signal peptide" evidence="1">
    <location>
        <begin position="1"/>
        <end position="25"/>
    </location>
</feature>
<feature type="chain" id="PRO_0000401376" description="Putative lipid-transfer protein DIR1">
    <location>
        <begin position="26"/>
        <end position="102"/>
    </location>
</feature>
<feature type="binding site" evidence="7 8">
    <location>
        <position position="34"/>
    </location>
    <ligand>
        <name>a 1-acyl-sn-glycero-3-phosphocholine</name>
        <dbReference type="ChEBI" id="CHEBI:58168"/>
    </ligand>
</feature>
<feature type="binding site" evidence="3 8">
    <location>
        <position position="36"/>
    </location>
    <ligand>
        <name>Zn(2+)</name>
        <dbReference type="ChEBI" id="CHEBI:29105"/>
    </ligand>
</feature>
<feature type="binding site" evidence="7 8">
    <location>
        <position position="38"/>
    </location>
    <ligand>
        <name>a 1-acyl-sn-glycero-3-phosphocholine</name>
        <dbReference type="ChEBI" id="CHEBI:58168"/>
    </ligand>
</feature>
<feature type="binding site" evidence="3 8">
    <location>
        <position position="62"/>
    </location>
    <ligand>
        <name>Zn(2+)</name>
        <dbReference type="ChEBI" id="CHEBI:29105"/>
    </ligand>
</feature>
<feature type="disulfide bond" evidence="3">
    <location>
        <begin position="30"/>
        <end position="67"/>
    </location>
</feature>
<feature type="disulfide bond" evidence="3">
    <location>
        <begin position="40"/>
        <end position="56"/>
    </location>
</feature>
<feature type="disulfide bond" evidence="3">
    <location>
        <begin position="57"/>
        <end position="94"/>
    </location>
</feature>
<feature type="disulfide bond" evidence="3">
    <location>
        <begin position="69"/>
        <end position="102"/>
    </location>
</feature>
<feature type="sequence conflict" description="In Ref. 5; AAM62457." evidence="6" ref="5">
    <original>V</original>
    <variation>A</variation>
    <location>
        <position position="9"/>
    </location>
</feature>
<feature type="helix" evidence="9">
    <location>
        <begin position="34"/>
        <end position="40"/>
    </location>
</feature>
<feature type="helix" evidence="9">
    <location>
        <begin position="41"/>
        <end position="44"/>
    </location>
</feature>
<feature type="strand" evidence="9">
    <location>
        <begin position="45"/>
        <end position="48"/>
    </location>
</feature>
<feature type="helix" evidence="9">
    <location>
        <begin position="54"/>
        <end position="60"/>
    </location>
</feature>
<feature type="helix" evidence="9">
    <location>
        <begin position="65"/>
        <end position="69"/>
    </location>
</feature>
<feature type="turn" evidence="9">
    <location>
        <begin position="70"/>
        <end position="73"/>
    </location>
</feature>
<feature type="helix" evidence="9">
    <location>
        <begin position="75"/>
        <end position="80"/>
    </location>
</feature>
<feature type="helix" evidence="9">
    <location>
        <begin position="84"/>
        <end position="93"/>
    </location>
</feature>
<keyword id="KW-0002">3D-structure</keyword>
<keyword id="KW-0052">Apoplast</keyword>
<keyword id="KW-0965">Cell junction</keyword>
<keyword id="KW-1015">Disulfide bond</keyword>
<keyword id="KW-0256">Endoplasmic reticulum</keyword>
<keyword id="KW-0445">Lipid transport</keyword>
<keyword id="KW-0446">Lipid-binding</keyword>
<keyword id="KW-0479">Metal-binding</keyword>
<keyword id="KW-0611">Plant defense</keyword>
<keyword id="KW-1185">Reference proteome</keyword>
<keyword id="KW-0964">Secreted</keyword>
<keyword id="KW-0732">Signal</keyword>
<keyword id="KW-0813">Transport</keyword>
<keyword id="KW-0862">Zinc</keyword>
<gene>
    <name type="primary">DIR1</name>
    <name type="ordered locus">At5g48485</name>
    <name type="ORF">MJE7</name>
</gene>
<protein>
    <recommendedName>
        <fullName>Putative lipid-transfer protein DIR1</fullName>
    </recommendedName>
    <alternativeName>
        <fullName>Protein DEFECTIVE IN INDUCED RESISTANCE 1</fullName>
    </alternativeName>
</protein>
<dbReference type="EMBL" id="AF342726">
    <property type="protein sequence ID" value="AAL76110.1"/>
    <property type="molecule type" value="Genomic_DNA"/>
</dbReference>
<dbReference type="EMBL" id="AB020745">
    <property type="status" value="NOT_ANNOTATED_CDS"/>
    <property type="molecule type" value="Genomic_DNA"/>
</dbReference>
<dbReference type="EMBL" id="CP002688">
    <property type="protein sequence ID" value="AED95676.1"/>
    <property type="molecule type" value="Genomic_DNA"/>
</dbReference>
<dbReference type="EMBL" id="AY062857">
    <property type="protein sequence ID" value="AAL32935.1"/>
    <property type="molecule type" value="mRNA"/>
</dbReference>
<dbReference type="EMBL" id="BT006510">
    <property type="protein sequence ID" value="AAP21318.1"/>
    <property type="molecule type" value="mRNA"/>
</dbReference>
<dbReference type="EMBL" id="AY085224">
    <property type="protein sequence ID" value="AAM62457.1"/>
    <property type="molecule type" value="mRNA"/>
</dbReference>
<dbReference type="RefSeq" id="NP_568699.1">
    <property type="nucleotide sequence ID" value="NM_124224.3"/>
</dbReference>
<dbReference type="PDB" id="2RKN">
    <property type="method" value="X-ray"/>
    <property type="resolution" value="1.60 A"/>
    <property type="chains" value="A=26-102"/>
</dbReference>
<dbReference type="PDBsum" id="2RKN"/>
<dbReference type="SMR" id="Q8W453"/>
<dbReference type="BioGRID" id="20150">
    <property type="interactions" value="2"/>
</dbReference>
<dbReference type="FunCoup" id="Q8W453">
    <property type="interactions" value="116"/>
</dbReference>
<dbReference type="STRING" id="3702.Q8W453"/>
<dbReference type="PaxDb" id="3702-AT5G48485.1"/>
<dbReference type="ProteomicsDB" id="224118"/>
<dbReference type="EnsemblPlants" id="AT5G48485.1">
    <property type="protein sequence ID" value="AT5G48485.1"/>
    <property type="gene ID" value="AT5G48485"/>
</dbReference>
<dbReference type="GeneID" id="834904"/>
<dbReference type="Gramene" id="AT5G48485.1">
    <property type="protein sequence ID" value="AT5G48485.1"/>
    <property type="gene ID" value="AT5G48485"/>
</dbReference>
<dbReference type="KEGG" id="ath:AT5G48485"/>
<dbReference type="Araport" id="AT5G48485"/>
<dbReference type="TAIR" id="AT5G48485">
    <property type="gene designation" value="DIR1"/>
</dbReference>
<dbReference type="eggNOG" id="ENOG502S7QX">
    <property type="taxonomic scope" value="Eukaryota"/>
</dbReference>
<dbReference type="HOGENOM" id="CLU_145659_1_0_1"/>
<dbReference type="InParanoid" id="Q8W453"/>
<dbReference type="OMA" id="ACKPWVT"/>
<dbReference type="OrthoDB" id="643149at2759"/>
<dbReference type="PhylomeDB" id="Q8W453"/>
<dbReference type="EvolutionaryTrace" id="Q8W453"/>
<dbReference type="PRO" id="PR:Q8W453"/>
<dbReference type="Proteomes" id="UP000006548">
    <property type="component" value="Chromosome 5"/>
</dbReference>
<dbReference type="ExpressionAtlas" id="Q8W453">
    <property type="expression patterns" value="baseline and differential"/>
</dbReference>
<dbReference type="GO" id="GO:0048046">
    <property type="term" value="C:apoplast"/>
    <property type="evidence" value="ECO:0007669"/>
    <property type="project" value="UniProtKB-SubCell"/>
</dbReference>
<dbReference type="GO" id="GO:0005783">
    <property type="term" value="C:endoplasmic reticulum"/>
    <property type="evidence" value="ECO:0000314"/>
    <property type="project" value="UniProtKB"/>
</dbReference>
<dbReference type="GO" id="GO:0009506">
    <property type="term" value="C:plasmodesma"/>
    <property type="evidence" value="ECO:0000314"/>
    <property type="project" value="UniProtKB"/>
</dbReference>
<dbReference type="GO" id="GO:0099503">
    <property type="term" value="C:secretory vesicle"/>
    <property type="evidence" value="ECO:0007005"/>
    <property type="project" value="TAIR"/>
</dbReference>
<dbReference type="GO" id="GO:0005504">
    <property type="term" value="F:fatty acid binding"/>
    <property type="evidence" value="ECO:0000314"/>
    <property type="project" value="UniProtKB"/>
</dbReference>
<dbReference type="GO" id="GO:0008270">
    <property type="term" value="F:zinc ion binding"/>
    <property type="evidence" value="ECO:0000314"/>
    <property type="project" value="UniProtKB"/>
</dbReference>
<dbReference type="GO" id="GO:0006869">
    <property type="term" value="P:lipid transport"/>
    <property type="evidence" value="ECO:0007669"/>
    <property type="project" value="UniProtKB-KW"/>
</dbReference>
<dbReference type="GO" id="GO:0009627">
    <property type="term" value="P:systemic acquired resistance"/>
    <property type="evidence" value="ECO:0000315"/>
    <property type="project" value="TAIR"/>
</dbReference>
<dbReference type="GO" id="GO:0009862">
    <property type="term" value="P:systemic acquired resistance, salicylic acid mediated signaling pathway"/>
    <property type="evidence" value="ECO:0000315"/>
    <property type="project" value="UniProtKB"/>
</dbReference>
<dbReference type="CDD" id="cd04660">
    <property type="entry name" value="nsLTP_like"/>
    <property type="match status" value="1"/>
</dbReference>
<dbReference type="Gene3D" id="1.10.110.10">
    <property type="entry name" value="Plant lipid-transfer and hydrophobic proteins"/>
    <property type="match status" value="1"/>
</dbReference>
<dbReference type="InterPro" id="IPR036312">
    <property type="entry name" value="Bifun_inhib/LTP/seed_sf"/>
</dbReference>
<dbReference type="InterPro" id="IPR016140">
    <property type="entry name" value="Bifunc_inhib/LTP/seed_store"/>
</dbReference>
<dbReference type="InterPro" id="IPR039265">
    <property type="entry name" value="DIR1-like"/>
</dbReference>
<dbReference type="InterPro" id="IPR044741">
    <property type="entry name" value="NsLTP-like"/>
</dbReference>
<dbReference type="PANTHER" id="PTHR33122">
    <property type="entry name" value="LIPID BINDING PROTEIN-RELATED"/>
    <property type="match status" value="1"/>
</dbReference>
<dbReference type="PANTHER" id="PTHR33122:SF60">
    <property type="entry name" value="LIPID-TRANSFER PROTEIN DIR1-RELATED"/>
    <property type="match status" value="1"/>
</dbReference>
<dbReference type="Pfam" id="PF14368">
    <property type="entry name" value="LTP_2"/>
    <property type="match status" value="1"/>
</dbReference>
<dbReference type="SMART" id="SM00499">
    <property type="entry name" value="AAI"/>
    <property type="match status" value="1"/>
</dbReference>
<dbReference type="SUPFAM" id="SSF47699">
    <property type="entry name" value="Bifunctional inhibitor/lipid-transfer protein/seed storage 2S albumin"/>
    <property type="match status" value="1"/>
</dbReference>
<reference key="1">
    <citation type="journal article" date="2002" name="Nature">
        <title>A putative lipid transfer protein involved in systemic resistance signalling in Arabidopsis.</title>
        <authorList>
            <person name="Maldonado A.M."/>
            <person name="Doerner P."/>
            <person name="Dixon R.A."/>
            <person name="Lamb C.J."/>
            <person name="Cameron R.K."/>
        </authorList>
    </citation>
    <scope>NUCLEOTIDE SEQUENCE [GENOMIC DNA]</scope>
    <scope>FUNCTION</scope>
    <scope>DISRUPTION PHENOTYPE</scope>
    <source>
        <strain>cv. Columbia</strain>
    </source>
</reference>
<reference key="2">
    <citation type="journal article" date="2000" name="DNA Res.">
        <title>Structural analysis of Arabidopsis thaliana chromosome 5. X. Sequence features of the regions of 3,076,755 bp covered by sixty P1 and TAC clones.</title>
        <authorList>
            <person name="Sato S."/>
            <person name="Nakamura Y."/>
            <person name="Kaneko T."/>
            <person name="Katoh T."/>
            <person name="Asamizu E."/>
            <person name="Kotani H."/>
            <person name="Tabata S."/>
        </authorList>
    </citation>
    <scope>NUCLEOTIDE SEQUENCE [LARGE SCALE GENOMIC DNA]</scope>
    <source>
        <strain>cv. Columbia</strain>
    </source>
</reference>
<reference key="3">
    <citation type="journal article" date="2017" name="Plant J.">
        <title>Araport11: a complete reannotation of the Arabidopsis thaliana reference genome.</title>
        <authorList>
            <person name="Cheng C.Y."/>
            <person name="Krishnakumar V."/>
            <person name="Chan A.P."/>
            <person name="Thibaud-Nissen F."/>
            <person name="Schobel S."/>
            <person name="Town C.D."/>
        </authorList>
    </citation>
    <scope>GENOME REANNOTATION</scope>
    <source>
        <strain>cv. Columbia</strain>
    </source>
</reference>
<reference key="4">
    <citation type="journal article" date="2003" name="Science">
        <title>Empirical analysis of transcriptional activity in the Arabidopsis genome.</title>
        <authorList>
            <person name="Yamada K."/>
            <person name="Lim J."/>
            <person name="Dale J.M."/>
            <person name="Chen H."/>
            <person name="Shinn P."/>
            <person name="Palm C.J."/>
            <person name="Southwick A.M."/>
            <person name="Wu H.C."/>
            <person name="Kim C.J."/>
            <person name="Nguyen M."/>
            <person name="Pham P.K."/>
            <person name="Cheuk R.F."/>
            <person name="Karlin-Newmann G."/>
            <person name="Liu S.X."/>
            <person name="Lam B."/>
            <person name="Sakano H."/>
            <person name="Wu T."/>
            <person name="Yu G."/>
            <person name="Miranda M."/>
            <person name="Quach H.L."/>
            <person name="Tripp M."/>
            <person name="Chang C.H."/>
            <person name="Lee J.M."/>
            <person name="Toriumi M.J."/>
            <person name="Chan M.M."/>
            <person name="Tang C.C."/>
            <person name="Onodera C.S."/>
            <person name="Deng J.M."/>
            <person name="Akiyama K."/>
            <person name="Ansari Y."/>
            <person name="Arakawa T."/>
            <person name="Banh J."/>
            <person name="Banno F."/>
            <person name="Bowser L."/>
            <person name="Brooks S.Y."/>
            <person name="Carninci P."/>
            <person name="Chao Q."/>
            <person name="Choy N."/>
            <person name="Enju A."/>
            <person name="Goldsmith A.D."/>
            <person name="Gurjal M."/>
            <person name="Hansen N.F."/>
            <person name="Hayashizaki Y."/>
            <person name="Johnson-Hopson C."/>
            <person name="Hsuan V.W."/>
            <person name="Iida K."/>
            <person name="Karnes M."/>
            <person name="Khan S."/>
            <person name="Koesema E."/>
            <person name="Ishida J."/>
            <person name="Jiang P.X."/>
            <person name="Jones T."/>
            <person name="Kawai J."/>
            <person name="Kamiya A."/>
            <person name="Meyers C."/>
            <person name="Nakajima M."/>
            <person name="Narusaka M."/>
            <person name="Seki M."/>
            <person name="Sakurai T."/>
            <person name="Satou M."/>
            <person name="Tamse R."/>
            <person name="Vaysberg M."/>
            <person name="Wallender E.K."/>
            <person name="Wong C."/>
            <person name="Yamamura Y."/>
            <person name="Yuan S."/>
            <person name="Shinozaki K."/>
            <person name="Davis R.W."/>
            <person name="Theologis A."/>
            <person name="Ecker J.R."/>
        </authorList>
    </citation>
    <scope>NUCLEOTIDE SEQUENCE [LARGE SCALE MRNA]</scope>
    <source>
        <strain>cv. Columbia</strain>
    </source>
</reference>
<reference key="5">
    <citation type="submission" date="2002-03" db="EMBL/GenBank/DDBJ databases">
        <title>Full-length cDNA from Arabidopsis thaliana.</title>
        <authorList>
            <person name="Brover V.V."/>
            <person name="Troukhan M.E."/>
            <person name="Alexandrov N.A."/>
            <person name="Lu Y.-P."/>
            <person name="Flavell R.B."/>
            <person name="Feldmann K.A."/>
        </authorList>
    </citation>
    <scope>NUCLEOTIDE SEQUENCE [LARGE SCALE MRNA]</scope>
</reference>
<reference key="6">
    <citation type="journal article" date="2013" name="Cell Rep.">
        <title>A feedback regulatory loop between G3P and lipid transfer proteins DIR1 and AZI1 mediates azelaic-acid-induced systemic immunity.</title>
        <authorList>
            <person name="Yu K."/>
            <person name="Soares J.M."/>
            <person name="Mandal M.K."/>
            <person name="Wang C."/>
            <person name="Chanda B."/>
            <person name="Gifford A.N."/>
            <person name="Fowler J.S."/>
            <person name="Navarre D."/>
            <person name="Kachroo A."/>
            <person name="Kachroo P."/>
        </authorList>
    </citation>
    <scope>FUNCTION</scope>
    <scope>DISRUPTION PHENOTYPE</scope>
    <scope>INDUCTION BY GLYCEROL-3-PHOSPHATE</scope>
    <scope>SUBCELLULAR LOCATION</scope>
    <scope>INTERACTION WITH AZI1</scope>
    <scope>SUBUNIT</scope>
    <source>
        <strain>cv. Columbia</strain>
    </source>
</reference>
<reference key="7">
    <citation type="journal article" date="2016" name="Cell Host Microbe">
        <title>Plasmodesmata localizing proteins regulate transport and signaling during systemic acquired immunity in plants.</title>
        <authorList>
            <person name="Lim G.H."/>
            <person name="Shine M.B."/>
            <person name="de Lorenzo L."/>
            <person name="Yu K."/>
            <person name="Cui W."/>
            <person name="Navarre D."/>
            <person name="Hunt A.G."/>
            <person name="Lee J.Y."/>
            <person name="Kachroo A."/>
            <person name="Kachroo P."/>
        </authorList>
    </citation>
    <scope>LACK OF INTERACTION WITH PDLP1</scope>
</reference>
<reference evidence="8" key="8">
    <citation type="journal article" date="2008" name="Protein Sci.">
        <title>The structure of 'defective in induced resistance' protein of Arabidopsis thaliana, DIR1, reveals a new type of lipid transfer protein.</title>
        <authorList>
            <person name="Lascombe M.B."/>
            <person name="Bakan B."/>
            <person name="Buhot N."/>
            <person name="Marion D."/>
            <person name="Blein J.P."/>
            <person name="Larue V."/>
            <person name="Lamb C."/>
            <person name="Prange T."/>
        </authorList>
    </citation>
    <scope>X-RAY CRYSTALLOGRAPHY (1.60 ANGSTROMS) OF 26-102 IN COMPLEX WITH FATTY ACID ANALOG AND ZINC IONS</scope>
    <scope>FUNCTION</scope>
    <scope>DISULFIDE BONDS</scope>
</reference>
<comment type="function">
    <text evidence="2 3 4">Putative lipid transfer protein required for systemic acquired resistance (SAR) long distance signaling. May interact with a lipid-derived molecule to promote long distance signaling associated with SAR. Together with AZI1, required for glycerol-3-phosphate- (G3P) and azelaic acid- (AA) induced systemic acquired resistance (SAR). Component of plant systemic immunity involved in priming defenses in a AA-dependent manner, by modulating production and/or translocation of a mobile signal(s) during SAR. Is able to bind with high affinity monoacylated phospholipids, mainly lysophosphatidylcholines (PubMed:18552128).</text>
</comment>
<comment type="cofactor">
    <cofactor>
        <name>Zn(2+)</name>
        <dbReference type="ChEBI" id="CHEBI:29105"/>
    </cofactor>
    <text>Binds 1 zinc ion per subunit.</text>
</comment>
<comment type="subunit">
    <text evidence="4 5">Self-interacts and binds to AZI1 (PubMed:23602565). Does not interact with PDLP1 (PubMed:27078071).</text>
</comment>
<comment type="subcellular location">
    <subcellularLocation>
        <location evidence="6">Secreted</location>
        <location evidence="6">Extracellular space</location>
        <location evidence="6">Apoplast</location>
    </subcellularLocation>
    <subcellularLocation>
        <location evidence="4">Endoplasmic reticulum</location>
    </subcellularLocation>
    <subcellularLocation>
        <location evidence="4">Cell junction</location>
        <location evidence="4">Plasmodesma</location>
    </subcellularLocation>
</comment>
<comment type="induction">
    <text evidence="4">Induced by glycerol-3-phosphate (G3P).</text>
</comment>
<comment type="disruption phenotype">
    <text evidence="2 4">No visible phenotype under normal growth condition, but compromised pathogen-induced glycerol-3-phosphate-(G3P) and azelaic acid- (AA) dependent systemic acquired resistance (SAR).</text>
</comment>
<comment type="similarity">
    <text evidence="6">Belongs to the A9/FIL1 family.</text>
</comment>
<proteinExistence type="evidence at protein level"/>
<sequence length="102" mass="10702">MASKKAAMVMMAMIVIMAMLVDTSVAIDLCGMSQDELNECKPAVSKENPTSPSQPCCTALQHADFACLCGYKNSPWLGSFGVDPELASALPKQCGLANAPTC</sequence>
<accession>Q8W453</accession>
<accession>Q8LEU7</accession>
<evidence type="ECO:0000255" key="1"/>
<evidence type="ECO:0000269" key="2">
    <source>
    </source>
</evidence>
<evidence type="ECO:0000269" key="3">
    <source>
    </source>
</evidence>
<evidence type="ECO:0000269" key="4">
    <source>
    </source>
</evidence>
<evidence type="ECO:0000269" key="5">
    <source>
    </source>
</evidence>
<evidence type="ECO:0000305" key="6"/>
<evidence type="ECO:0000305" key="7">
    <source>
    </source>
</evidence>
<evidence type="ECO:0007744" key="8">
    <source>
        <dbReference type="PDB" id="2RKN"/>
    </source>
</evidence>
<evidence type="ECO:0007829" key="9">
    <source>
        <dbReference type="PDB" id="2RKN"/>
    </source>
</evidence>
<organism>
    <name type="scientific">Arabidopsis thaliana</name>
    <name type="common">Mouse-ear cress</name>
    <dbReference type="NCBI Taxonomy" id="3702"/>
    <lineage>
        <taxon>Eukaryota</taxon>
        <taxon>Viridiplantae</taxon>
        <taxon>Streptophyta</taxon>
        <taxon>Embryophyta</taxon>
        <taxon>Tracheophyta</taxon>
        <taxon>Spermatophyta</taxon>
        <taxon>Magnoliopsida</taxon>
        <taxon>eudicotyledons</taxon>
        <taxon>Gunneridae</taxon>
        <taxon>Pentapetalae</taxon>
        <taxon>rosids</taxon>
        <taxon>malvids</taxon>
        <taxon>Brassicales</taxon>
        <taxon>Brassicaceae</taxon>
        <taxon>Camelineae</taxon>
        <taxon>Arabidopsis</taxon>
    </lineage>
</organism>
<name>DIRL1_ARATH</name>